<accession>Q07XC8</accession>
<keyword id="KW-0010">Activator</keyword>
<keyword id="KW-0067">ATP-binding</keyword>
<keyword id="KW-0238">DNA-binding</keyword>
<keyword id="KW-0347">Helicase</keyword>
<keyword id="KW-0378">Hydrolase</keyword>
<keyword id="KW-0547">Nucleotide-binding</keyword>
<keyword id="KW-1185">Reference proteome</keyword>
<keyword id="KW-0804">Transcription</keyword>
<keyword id="KW-0805">Transcription regulation</keyword>
<evidence type="ECO:0000255" key="1">
    <source>
        <dbReference type="HAMAP-Rule" id="MF_01821"/>
    </source>
</evidence>
<organism>
    <name type="scientific">Shewanella frigidimarina (strain NCIMB 400)</name>
    <dbReference type="NCBI Taxonomy" id="318167"/>
    <lineage>
        <taxon>Bacteria</taxon>
        <taxon>Pseudomonadati</taxon>
        <taxon>Pseudomonadota</taxon>
        <taxon>Gammaproteobacteria</taxon>
        <taxon>Alteromonadales</taxon>
        <taxon>Shewanellaceae</taxon>
        <taxon>Shewanella</taxon>
    </lineage>
</organism>
<sequence>MPFALGQRWISDTESELGLGTVVQVEGRMVTLLFPATGENRMFSRSEAPLTRVIFNPGDTVESGEGWSITIEELEEKNQLVIYHGIHSETQEKVSLRETMLSHNIRFNKPQDRLFAGQIDRLERFGVRYQCQLLRHKLATSDLLGQQGPRVGLIAHQQWIAHEVGSRYAPRVLLADEVGLGKTIEAGLIIHQQLLTGRAERILVIVPDTLRHQWLVEMLRRFNLRFSVFDEDRCVEAYADNDNPFYTEQLIICSLDLLRKKKRLEQAVDADWDLMVVDEAHHLEWSEDAPSRAYKIVEALSEVVPGVLLLTATPDQLGHQSHFARLRLLDPDRFYDYDAFLAEEASYKDVAEAAEALSQDKKLPDSAINSLTELLSEKDIEPSIRLIQSKDVDAESQQAARQELLQELLDRHGTGRVLYRNSRASVKGFPKRLFNAYPHDMPAQYVTAERVNAMMGSAKQPQAKAAQALSPEKLYQAFENDSASWWKFDPRVDWLIEFLKSHRSKKVLIIASQAETALSLEEALRTREGIQATVFHEDMSIIERDKAGAYFAQEEGGAQALICSEIGSEGRNFQFASHLILFDLPLNPDLLEQRIGRLDRIGQQNDIQIHLPYLRDTAQERLMRWYHQGLNAFELTCPSGHVLFNEFADELINVLCDDDEDLMTQLLNHTQHRYKELKQAMEQGRDKLLEINSHGGERANALIKRLSDSDNDTHLIGSVIRLWDIIGVDQEDRGENSIILRPSEHMMFPTYPGLNEDGITVTFDRETALSRDDIAFITQEHPLVQTGLDLITGSETGTTSVAILKNKALPAGTLFLELIYMADASAPKSTQLYRYLPPTPIRVLLDKNGLNMADKVDYASFDKQLSAVNRHIASKLVNASQPILHPLLAKGEEYAKESLTQLVVDARAKMTQQLTGELERLEALKAVNPNIREDELEYIRNQMTEITGYMDNSQLQLDAIRMVLVSHV</sequence>
<feature type="chain" id="PRO_1000088382" description="RNA polymerase-associated protein RapA">
    <location>
        <begin position="1"/>
        <end position="968"/>
    </location>
</feature>
<feature type="domain" description="Helicase ATP-binding" evidence="1">
    <location>
        <begin position="163"/>
        <end position="332"/>
    </location>
</feature>
<feature type="domain" description="Helicase C-terminal" evidence="1">
    <location>
        <begin position="491"/>
        <end position="655"/>
    </location>
</feature>
<feature type="short sequence motif" description="DEAH box">
    <location>
        <begin position="278"/>
        <end position="281"/>
    </location>
</feature>
<feature type="binding site" evidence="1">
    <location>
        <begin position="176"/>
        <end position="183"/>
    </location>
    <ligand>
        <name>ATP</name>
        <dbReference type="ChEBI" id="CHEBI:30616"/>
    </ligand>
</feature>
<comment type="function">
    <text evidence="1">Transcription regulator that activates transcription by stimulating RNA polymerase (RNAP) recycling in case of stress conditions such as supercoiled DNA or high salt concentrations. Probably acts by releasing the RNAP, when it is trapped or immobilized on tightly supercoiled DNA. Does not activate transcription on linear DNA. Probably not involved in DNA repair.</text>
</comment>
<comment type="subunit">
    <text evidence="1">Interacts with the RNAP. Has a higher affinity for the core RNAP than for the holoenzyme. Its ATPase activity is stimulated by binding to RNAP.</text>
</comment>
<comment type="similarity">
    <text evidence="1">Belongs to the SNF2/RAD54 helicase family. RapA subfamily.</text>
</comment>
<protein>
    <recommendedName>
        <fullName evidence="1">RNA polymerase-associated protein RapA</fullName>
        <ecNumber evidence="1">3.6.4.-</ecNumber>
    </recommendedName>
    <alternativeName>
        <fullName evidence="1">ATP-dependent helicase HepA</fullName>
    </alternativeName>
</protein>
<dbReference type="EC" id="3.6.4.-" evidence="1"/>
<dbReference type="EMBL" id="CP000447">
    <property type="protein sequence ID" value="ABI73336.1"/>
    <property type="molecule type" value="Genomic_DNA"/>
</dbReference>
<dbReference type="RefSeq" id="WP_011638927.1">
    <property type="nucleotide sequence ID" value="NC_008345.1"/>
</dbReference>
<dbReference type="SMR" id="Q07XC8"/>
<dbReference type="STRING" id="318167.Sfri_3508"/>
<dbReference type="KEGG" id="sfr:Sfri_3508"/>
<dbReference type="eggNOG" id="COG0553">
    <property type="taxonomic scope" value="Bacteria"/>
</dbReference>
<dbReference type="HOGENOM" id="CLU_011520_0_0_6"/>
<dbReference type="OrthoDB" id="9814088at2"/>
<dbReference type="Proteomes" id="UP000000684">
    <property type="component" value="Chromosome"/>
</dbReference>
<dbReference type="GO" id="GO:0005524">
    <property type="term" value="F:ATP binding"/>
    <property type="evidence" value="ECO:0007669"/>
    <property type="project" value="UniProtKB-UniRule"/>
</dbReference>
<dbReference type="GO" id="GO:0003677">
    <property type="term" value="F:DNA binding"/>
    <property type="evidence" value="ECO:0007669"/>
    <property type="project" value="UniProtKB-KW"/>
</dbReference>
<dbReference type="GO" id="GO:0004386">
    <property type="term" value="F:helicase activity"/>
    <property type="evidence" value="ECO:0007669"/>
    <property type="project" value="UniProtKB-UniRule"/>
</dbReference>
<dbReference type="GO" id="GO:0016817">
    <property type="term" value="F:hydrolase activity, acting on acid anhydrides"/>
    <property type="evidence" value="ECO:0007669"/>
    <property type="project" value="InterPro"/>
</dbReference>
<dbReference type="GO" id="GO:0006355">
    <property type="term" value="P:regulation of DNA-templated transcription"/>
    <property type="evidence" value="ECO:0007669"/>
    <property type="project" value="UniProtKB-UniRule"/>
</dbReference>
<dbReference type="CDD" id="cd18011">
    <property type="entry name" value="DEXDc_RapA"/>
    <property type="match status" value="1"/>
</dbReference>
<dbReference type="CDD" id="cd18793">
    <property type="entry name" value="SF2_C_SNF"/>
    <property type="match status" value="1"/>
</dbReference>
<dbReference type="Gene3D" id="2.30.30.140">
    <property type="match status" value="1"/>
</dbReference>
<dbReference type="Gene3D" id="2.30.30.930">
    <property type="match status" value="1"/>
</dbReference>
<dbReference type="Gene3D" id="3.30.360.80">
    <property type="match status" value="1"/>
</dbReference>
<dbReference type="Gene3D" id="6.10.140.1500">
    <property type="match status" value="1"/>
</dbReference>
<dbReference type="Gene3D" id="6.10.140.2230">
    <property type="match status" value="1"/>
</dbReference>
<dbReference type="Gene3D" id="3.40.50.300">
    <property type="entry name" value="P-loop containing nucleotide triphosphate hydrolases"/>
    <property type="match status" value="1"/>
</dbReference>
<dbReference type="Gene3D" id="3.40.50.10810">
    <property type="entry name" value="Tandem AAA-ATPase domain"/>
    <property type="match status" value="1"/>
</dbReference>
<dbReference type="HAMAP" id="MF_01821">
    <property type="entry name" value="Helicase_RapA"/>
    <property type="match status" value="1"/>
</dbReference>
<dbReference type="InterPro" id="IPR014001">
    <property type="entry name" value="Helicase_ATP-bd"/>
</dbReference>
<dbReference type="InterPro" id="IPR001650">
    <property type="entry name" value="Helicase_C-like"/>
</dbReference>
<dbReference type="InterPro" id="IPR023949">
    <property type="entry name" value="Helicase_RapA"/>
</dbReference>
<dbReference type="InterPro" id="IPR027417">
    <property type="entry name" value="P-loop_NTPase"/>
</dbReference>
<dbReference type="InterPro" id="IPR022737">
    <property type="entry name" value="RapA_C"/>
</dbReference>
<dbReference type="InterPro" id="IPR038718">
    <property type="entry name" value="SNF2-like_sf"/>
</dbReference>
<dbReference type="InterPro" id="IPR049730">
    <property type="entry name" value="SNF2/RAD54-like_C"/>
</dbReference>
<dbReference type="InterPro" id="IPR000330">
    <property type="entry name" value="SNF2_N"/>
</dbReference>
<dbReference type="InterPro" id="IPR040765">
    <property type="entry name" value="Tudor_1_RapA"/>
</dbReference>
<dbReference type="InterPro" id="IPR040766">
    <property type="entry name" value="Tudor_2_RapA"/>
</dbReference>
<dbReference type="NCBIfam" id="NF003426">
    <property type="entry name" value="PRK04914.1"/>
    <property type="match status" value="1"/>
</dbReference>
<dbReference type="PANTHER" id="PTHR45766">
    <property type="entry name" value="DNA ANNEALING HELICASE AND ENDONUCLEASE ZRANB3 FAMILY MEMBER"/>
    <property type="match status" value="1"/>
</dbReference>
<dbReference type="PANTHER" id="PTHR45766:SF6">
    <property type="entry name" value="SWI_SNF-RELATED MATRIX-ASSOCIATED ACTIN-DEPENDENT REGULATOR OF CHROMATIN SUBFAMILY A-LIKE PROTEIN 1"/>
    <property type="match status" value="1"/>
</dbReference>
<dbReference type="Pfam" id="PF00271">
    <property type="entry name" value="Helicase_C"/>
    <property type="match status" value="1"/>
</dbReference>
<dbReference type="Pfam" id="PF12137">
    <property type="entry name" value="RapA_C"/>
    <property type="match status" value="1"/>
</dbReference>
<dbReference type="Pfam" id="PF00176">
    <property type="entry name" value="SNF2-rel_dom"/>
    <property type="match status" value="1"/>
</dbReference>
<dbReference type="Pfam" id="PF18339">
    <property type="entry name" value="Tudor_1_RapA"/>
    <property type="match status" value="1"/>
</dbReference>
<dbReference type="Pfam" id="PF18337">
    <property type="entry name" value="Tudor_RapA"/>
    <property type="match status" value="1"/>
</dbReference>
<dbReference type="SMART" id="SM00487">
    <property type="entry name" value="DEXDc"/>
    <property type="match status" value="1"/>
</dbReference>
<dbReference type="SMART" id="SM00490">
    <property type="entry name" value="HELICc"/>
    <property type="match status" value="1"/>
</dbReference>
<dbReference type="SUPFAM" id="SSF52540">
    <property type="entry name" value="P-loop containing nucleoside triphosphate hydrolases"/>
    <property type="match status" value="2"/>
</dbReference>
<dbReference type="PROSITE" id="PS51192">
    <property type="entry name" value="HELICASE_ATP_BIND_1"/>
    <property type="match status" value="1"/>
</dbReference>
<dbReference type="PROSITE" id="PS51194">
    <property type="entry name" value="HELICASE_CTER"/>
    <property type="match status" value="1"/>
</dbReference>
<gene>
    <name evidence="1" type="primary">rapA</name>
    <name type="ordered locus">Sfri_3508</name>
</gene>
<name>RAPA_SHEFN</name>
<reference key="1">
    <citation type="submission" date="2006-08" db="EMBL/GenBank/DDBJ databases">
        <title>Complete sequence of Shewanella frigidimarina NCIMB 400.</title>
        <authorList>
            <consortium name="US DOE Joint Genome Institute"/>
            <person name="Copeland A."/>
            <person name="Lucas S."/>
            <person name="Lapidus A."/>
            <person name="Barry K."/>
            <person name="Detter J.C."/>
            <person name="Glavina del Rio T."/>
            <person name="Hammon N."/>
            <person name="Israni S."/>
            <person name="Dalin E."/>
            <person name="Tice H."/>
            <person name="Pitluck S."/>
            <person name="Fredrickson J.K."/>
            <person name="Kolker E."/>
            <person name="McCuel L.A."/>
            <person name="DiChristina T."/>
            <person name="Nealson K.H."/>
            <person name="Newman D."/>
            <person name="Tiedje J.M."/>
            <person name="Zhou J."/>
            <person name="Romine M.F."/>
            <person name="Culley D.E."/>
            <person name="Serres M."/>
            <person name="Chertkov O."/>
            <person name="Brettin T."/>
            <person name="Bruce D."/>
            <person name="Han C."/>
            <person name="Tapia R."/>
            <person name="Gilna P."/>
            <person name="Schmutz J."/>
            <person name="Larimer F."/>
            <person name="Land M."/>
            <person name="Hauser L."/>
            <person name="Kyrpides N."/>
            <person name="Mikhailova N."/>
            <person name="Richardson P."/>
        </authorList>
    </citation>
    <scope>NUCLEOTIDE SEQUENCE [LARGE SCALE GENOMIC DNA]</scope>
    <source>
        <strain>NCIMB 400</strain>
    </source>
</reference>
<proteinExistence type="inferred from homology"/>